<sequence length="75" mass="8666">MANLPKEQKLLFQGKVTHVFNAQEYEVTLENGIKLNCHIAGKMKIHHIKIIIGDMVKVEISPYDLSKGRIVYRFK</sequence>
<protein>
    <recommendedName>
        <fullName evidence="1">Translation initiation factor IF-1</fullName>
    </recommendedName>
</protein>
<evidence type="ECO:0000255" key="1">
    <source>
        <dbReference type="HAMAP-Rule" id="MF_00075"/>
    </source>
</evidence>
<comment type="function">
    <text evidence="1">One of the essential components for the initiation of protein synthesis. Stabilizes the binding of IF-2 and IF-3 on the 30S subunit to which N-formylmethionyl-tRNA(fMet) subsequently binds. Helps modulate mRNA selection, yielding the 30S pre-initiation complex (PIC). Upon addition of the 50S ribosomal subunit IF-1, IF-2 and IF-3 are released leaving the mature 70S translation initiation complex.</text>
</comment>
<comment type="subunit">
    <text evidence="1">Component of the 30S ribosomal translation pre-initiation complex which assembles on the 30S ribosome in the order IF-2 and IF-3, IF-1 and N-formylmethionyl-tRNA(fMet); mRNA recruitment can occur at any time during PIC assembly.</text>
</comment>
<comment type="subcellular location">
    <subcellularLocation>
        <location evidence="1">Cytoplasm</location>
    </subcellularLocation>
</comment>
<comment type="similarity">
    <text evidence="1">Belongs to the IF-1 family.</text>
</comment>
<organism>
    <name type="scientific">Mesomycoplasma hyopneumoniae (strain J / ATCC 25934 / NCTC 10110)</name>
    <name type="common">Mycoplasma hyopneumoniae</name>
    <dbReference type="NCBI Taxonomy" id="262719"/>
    <lineage>
        <taxon>Bacteria</taxon>
        <taxon>Bacillati</taxon>
        <taxon>Mycoplasmatota</taxon>
        <taxon>Mycoplasmoidales</taxon>
        <taxon>Metamycoplasmataceae</taxon>
        <taxon>Mesomycoplasma</taxon>
    </lineage>
</organism>
<dbReference type="EMBL" id="AE017243">
    <property type="protein sequence ID" value="AAZ44259.2"/>
    <property type="molecule type" value="Genomic_DNA"/>
</dbReference>
<dbReference type="RefSeq" id="WP_011206047.1">
    <property type="nucleotide sequence ID" value="NC_007295.1"/>
</dbReference>
<dbReference type="SMR" id="Q4AAG2"/>
<dbReference type="GeneID" id="41334471"/>
<dbReference type="KEGG" id="mhj:MHJ_0168"/>
<dbReference type="eggNOG" id="COG0361">
    <property type="taxonomic scope" value="Bacteria"/>
</dbReference>
<dbReference type="HOGENOM" id="CLU_151267_1_0_14"/>
<dbReference type="OrthoDB" id="9803250at2"/>
<dbReference type="Proteomes" id="UP000000548">
    <property type="component" value="Chromosome"/>
</dbReference>
<dbReference type="GO" id="GO:0005829">
    <property type="term" value="C:cytosol"/>
    <property type="evidence" value="ECO:0007669"/>
    <property type="project" value="TreeGrafter"/>
</dbReference>
<dbReference type="GO" id="GO:0043022">
    <property type="term" value="F:ribosome binding"/>
    <property type="evidence" value="ECO:0007669"/>
    <property type="project" value="UniProtKB-UniRule"/>
</dbReference>
<dbReference type="GO" id="GO:0019843">
    <property type="term" value="F:rRNA binding"/>
    <property type="evidence" value="ECO:0007669"/>
    <property type="project" value="UniProtKB-UniRule"/>
</dbReference>
<dbReference type="GO" id="GO:0003743">
    <property type="term" value="F:translation initiation factor activity"/>
    <property type="evidence" value="ECO:0007669"/>
    <property type="project" value="UniProtKB-UniRule"/>
</dbReference>
<dbReference type="FunFam" id="2.40.50.140:FF:000002">
    <property type="entry name" value="Translation initiation factor IF-1"/>
    <property type="match status" value="1"/>
</dbReference>
<dbReference type="Gene3D" id="2.40.50.140">
    <property type="entry name" value="Nucleic acid-binding proteins"/>
    <property type="match status" value="1"/>
</dbReference>
<dbReference type="HAMAP" id="MF_00075">
    <property type="entry name" value="IF_1"/>
    <property type="match status" value="1"/>
</dbReference>
<dbReference type="InterPro" id="IPR012340">
    <property type="entry name" value="NA-bd_OB-fold"/>
</dbReference>
<dbReference type="InterPro" id="IPR006196">
    <property type="entry name" value="RNA-binding_domain_S1_IF1"/>
</dbReference>
<dbReference type="InterPro" id="IPR003029">
    <property type="entry name" value="S1_domain"/>
</dbReference>
<dbReference type="InterPro" id="IPR004368">
    <property type="entry name" value="TIF_IF1"/>
</dbReference>
<dbReference type="NCBIfam" id="TIGR00008">
    <property type="entry name" value="infA"/>
    <property type="match status" value="1"/>
</dbReference>
<dbReference type="PANTHER" id="PTHR33370">
    <property type="entry name" value="TRANSLATION INITIATION FACTOR IF-1, CHLOROPLASTIC"/>
    <property type="match status" value="1"/>
</dbReference>
<dbReference type="PANTHER" id="PTHR33370:SF1">
    <property type="entry name" value="TRANSLATION INITIATION FACTOR IF-1, CHLOROPLASTIC"/>
    <property type="match status" value="1"/>
</dbReference>
<dbReference type="Pfam" id="PF01176">
    <property type="entry name" value="eIF-1a"/>
    <property type="match status" value="1"/>
</dbReference>
<dbReference type="SMART" id="SM00316">
    <property type="entry name" value="S1"/>
    <property type="match status" value="1"/>
</dbReference>
<dbReference type="SUPFAM" id="SSF50249">
    <property type="entry name" value="Nucleic acid-binding proteins"/>
    <property type="match status" value="1"/>
</dbReference>
<dbReference type="PROSITE" id="PS50832">
    <property type="entry name" value="S1_IF1_TYPE"/>
    <property type="match status" value="1"/>
</dbReference>
<reference key="1">
    <citation type="journal article" date="2005" name="J. Bacteriol.">
        <title>Swine and poultry pathogens: the complete genome sequences of two strains of Mycoplasma hyopneumoniae and a strain of Mycoplasma synoviae.</title>
        <authorList>
            <person name="Vasconcelos A.T.R."/>
            <person name="Ferreira H.B."/>
            <person name="Bizarro C.V."/>
            <person name="Bonatto S.L."/>
            <person name="Carvalho M.O."/>
            <person name="Pinto P.M."/>
            <person name="Almeida D.F."/>
            <person name="Almeida L.G.P."/>
            <person name="Almeida R."/>
            <person name="Alves-Junior L."/>
            <person name="Assuncao E.N."/>
            <person name="Azevedo V.A.C."/>
            <person name="Bogo M.R."/>
            <person name="Brigido M.M."/>
            <person name="Brocchi M."/>
            <person name="Burity H.A."/>
            <person name="Camargo A.A."/>
            <person name="Camargo S.S."/>
            <person name="Carepo M.S."/>
            <person name="Carraro D.M."/>
            <person name="de Mattos Cascardo J.C."/>
            <person name="Castro L.A."/>
            <person name="Cavalcanti G."/>
            <person name="Chemale G."/>
            <person name="Collevatti R.G."/>
            <person name="Cunha C.W."/>
            <person name="Dallagiovanna B."/>
            <person name="Dambros B.P."/>
            <person name="Dellagostin O.A."/>
            <person name="Falcao C."/>
            <person name="Fantinatti-Garboggini F."/>
            <person name="Felipe M.S.S."/>
            <person name="Fiorentin L."/>
            <person name="Franco G.R."/>
            <person name="Freitas N.S.A."/>
            <person name="Frias D."/>
            <person name="Grangeiro T.B."/>
            <person name="Grisard E.C."/>
            <person name="Guimaraes C.T."/>
            <person name="Hungria M."/>
            <person name="Jardim S.N."/>
            <person name="Krieger M.A."/>
            <person name="Laurino J.P."/>
            <person name="Lima L.F.A."/>
            <person name="Lopes M.I."/>
            <person name="Loreto E.L.S."/>
            <person name="Madeira H.M.F."/>
            <person name="Manfio G.P."/>
            <person name="Maranhao A.Q."/>
            <person name="Martinkovics C.T."/>
            <person name="Medeiros S.R.B."/>
            <person name="Moreira M.A.M."/>
            <person name="Neiva M."/>
            <person name="Ramalho-Neto C.E."/>
            <person name="Nicolas M.F."/>
            <person name="Oliveira S.C."/>
            <person name="Paixao R.F.C."/>
            <person name="Pedrosa F.O."/>
            <person name="Pena S.D.J."/>
            <person name="Pereira M."/>
            <person name="Pereira-Ferrari L."/>
            <person name="Piffer I."/>
            <person name="Pinto L.S."/>
            <person name="Potrich D.P."/>
            <person name="Salim A.C.M."/>
            <person name="Santos F.R."/>
            <person name="Schmitt R."/>
            <person name="Schneider M.P.C."/>
            <person name="Schrank A."/>
            <person name="Schrank I.S."/>
            <person name="Schuck A.F."/>
            <person name="Seuanez H.N."/>
            <person name="Silva D.W."/>
            <person name="Silva R."/>
            <person name="Silva S.C."/>
            <person name="Soares C.M.A."/>
            <person name="Souza K.R.L."/>
            <person name="Souza R.C."/>
            <person name="Staats C.C."/>
            <person name="Steffens M.B.R."/>
            <person name="Teixeira S.M.R."/>
            <person name="Urmenyi T.P."/>
            <person name="Vainstein M.H."/>
            <person name="Zuccherato L.W."/>
            <person name="Simpson A.J.G."/>
            <person name="Zaha A."/>
        </authorList>
    </citation>
    <scope>NUCLEOTIDE SEQUENCE [LARGE SCALE GENOMIC DNA]</scope>
    <source>
        <strain>J / ATCC 25934 / NCTC 10110</strain>
    </source>
</reference>
<accession>Q4AAG2</accession>
<feature type="chain" id="PRO_0000263824" description="Translation initiation factor IF-1">
    <location>
        <begin position="1"/>
        <end position="75"/>
    </location>
</feature>
<feature type="domain" description="S1-like" evidence="1">
    <location>
        <begin position="1"/>
        <end position="75"/>
    </location>
</feature>
<proteinExistence type="inferred from homology"/>
<gene>
    <name evidence="1" type="primary">infA</name>
    <name type="ordered locus">MHJ_0168</name>
</gene>
<name>IF1_MESHJ</name>
<keyword id="KW-0963">Cytoplasm</keyword>
<keyword id="KW-0396">Initiation factor</keyword>
<keyword id="KW-0648">Protein biosynthesis</keyword>
<keyword id="KW-0694">RNA-binding</keyword>
<keyword id="KW-0699">rRNA-binding</keyword>